<name>RECA_ECO27</name>
<proteinExistence type="evidence at protein level"/>
<comment type="function">
    <text evidence="1">Can catalyze the hydrolysis of ATP in the presence of single-stranded DNA, the ATP-dependent uptake of single-stranded DNA by duplex DNA, and the ATP-dependent hybridization of homologous single-stranded DNAs. It interacts with LexA causing its activation and leading to its autocatalytic cleavage.</text>
</comment>
<comment type="function">
    <text evidence="3">Plays a role in recovery after DNA ADP-ribosylation.</text>
</comment>
<comment type="subcellular location">
    <subcellularLocation>
        <location evidence="1">Cytoplasm</location>
    </subcellularLocation>
</comment>
<comment type="induction">
    <text evidence="3">Induced by expression of DNA ADP-ribosyl transferase (darT) mutant G49D but not by mutant E170A; G49D has decreased ssDNA ADP-ribosylation activity while E170A has lost the activity (at protein level).</text>
</comment>
<comment type="disruption phenotype">
    <text evidence="3">Significantly reduced survival of cells expressing DNA ADP-ribosyl transferase (darT) mutant G49D.</text>
</comment>
<comment type="similarity">
    <text evidence="1">Belongs to the RecA family.</text>
</comment>
<evidence type="ECO:0000255" key="1">
    <source>
        <dbReference type="HAMAP-Rule" id="MF_00268"/>
    </source>
</evidence>
<evidence type="ECO:0000256" key="2">
    <source>
        <dbReference type="SAM" id="MobiDB-lite"/>
    </source>
</evidence>
<evidence type="ECO:0000269" key="3">
    <source>
    </source>
</evidence>
<sequence length="353" mass="37973">MAIDENKQKALAAALGQIEKQFGKGSIMRLGEDRSMDVETISTGSLSLDIALGAGGLPMGRIVEIYGPESSGKTTLTLQVIAAAQREGKTCAFIDAEHALDPIYARKLGVDIDNLLCSQPDTGEQALEICDALARSGAVDVIVVDSVAALTPKAEIEGEIGDSHMGLAARMMSQAMRKLAGNLKQSNTLLIFINQIRMKIGVMFGNPETTTGGNALKFYASVRLDIRRIGAVKEGENVVGSETRVKVVKNKIAAPFKQAEFQILYGEGINFYGELVDLGVKEKLIEKAGAWYSYKGEKIGQGKANATAWLKDNPETAKEIEKKVRELLLSNPNSTPDFSVDDSEGVAETNEDF</sequence>
<accession>B7UHB7</accession>
<keyword id="KW-0067">ATP-binding</keyword>
<keyword id="KW-0963">Cytoplasm</keyword>
<keyword id="KW-0227">DNA damage</keyword>
<keyword id="KW-0233">DNA recombination</keyword>
<keyword id="KW-0234">DNA repair</keyword>
<keyword id="KW-0238">DNA-binding</keyword>
<keyword id="KW-0547">Nucleotide-binding</keyword>
<keyword id="KW-1185">Reference proteome</keyword>
<keyword id="KW-0742">SOS response</keyword>
<organism>
    <name type="scientific">Escherichia coli O127:H6 (strain E2348/69 / EPEC)</name>
    <dbReference type="NCBI Taxonomy" id="574521"/>
    <lineage>
        <taxon>Bacteria</taxon>
        <taxon>Pseudomonadati</taxon>
        <taxon>Pseudomonadota</taxon>
        <taxon>Gammaproteobacteria</taxon>
        <taxon>Enterobacterales</taxon>
        <taxon>Enterobacteriaceae</taxon>
        <taxon>Escherichia</taxon>
    </lineage>
</organism>
<feature type="chain" id="PRO_1000193308" description="Protein RecA">
    <location>
        <begin position="1"/>
        <end position="353"/>
    </location>
</feature>
<feature type="region of interest" description="Disordered" evidence="2">
    <location>
        <begin position="330"/>
        <end position="353"/>
    </location>
</feature>
<feature type="compositionally biased region" description="Acidic residues" evidence="2">
    <location>
        <begin position="339"/>
        <end position="353"/>
    </location>
</feature>
<feature type="binding site" evidence="1">
    <location>
        <begin position="67"/>
        <end position="74"/>
    </location>
    <ligand>
        <name>ATP</name>
        <dbReference type="ChEBI" id="CHEBI:30616"/>
    </ligand>
</feature>
<gene>
    <name evidence="1" type="primary">recA</name>
    <name type="ordered locus">E2348C_2962</name>
</gene>
<reference key="1">
    <citation type="journal article" date="2009" name="J. Bacteriol.">
        <title>Complete genome sequence and comparative genome analysis of enteropathogenic Escherichia coli O127:H6 strain E2348/69.</title>
        <authorList>
            <person name="Iguchi A."/>
            <person name="Thomson N.R."/>
            <person name="Ogura Y."/>
            <person name="Saunders D."/>
            <person name="Ooka T."/>
            <person name="Henderson I.R."/>
            <person name="Harris D."/>
            <person name="Asadulghani M."/>
            <person name="Kurokawa K."/>
            <person name="Dean P."/>
            <person name="Kenny B."/>
            <person name="Quail M.A."/>
            <person name="Thurston S."/>
            <person name="Dougan G."/>
            <person name="Hayashi T."/>
            <person name="Parkhill J."/>
            <person name="Frankel G."/>
        </authorList>
    </citation>
    <scope>NUCLEOTIDE SEQUENCE [LARGE SCALE GENOMIC DNA]</scope>
    <source>
        <strain>E2348/69 / EPEC</strain>
    </source>
</reference>
<reference key="2">
    <citation type="journal article" date="2020" name="Cell Rep.">
        <title>DNA ADP-Ribosylation Stalls Replication and Is Reversed by RecF-Mediated Homologous Recombination and Nucleotide Excision Repair.</title>
        <authorList>
            <person name="Lawaree E."/>
            <person name="Jankevicius G."/>
            <person name="Cooper C."/>
            <person name="Ahel I."/>
            <person name="Uphoff S."/>
            <person name="Tang C.M."/>
        </authorList>
    </citation>
    <scope>FUNCTION</scope>
    <scope>INDUCTION BY TOXIN DART</scope>
    <scope>DISRUPTION PHENOTYPE</scope>
    <source>
        <strain>E2348/69 / EPEC</strain>
    </source>
</reference>
<protein>
    <recommendedName>
        <fullName evidence="1">Protein RecA</fullName>
    </recommendedName>
    <alternativeName>
        <fullName evidence="1">Recombinase A</fullName>
    </alternativeName>
</protein>
<dbReference type="EMBL" id="FM180568">
    <property type="protein sequence ID" value="CAS10510.1"/>
    <property type="molecule type" value="Genomic_DNA"/>
</dbReference>
<dbReference type="RefSeq" id="WP_000963143.1">
    <property type="nucleotide sequence ID" value="NC_011601.1"/>
</dbReference>
<dbReference type="SMR" id="B7UHB7"/>
<dbReference type="GeneID" id="93779312"/>
<dbReference type="KEGG" id="ecg:E2348C_2962"/>
<dbReference type="HOGENOM" id="CLU_040469_3_2_6"/>
<dbReference type="Proteomes" id="UP000008205">
    <property type="component" value="Chromosome"/>
</dbReference>
<dbReference type="GO" id="GO:0005829">
    <property type="term" value="C:cytosol"/>
    <property type="evidence" value="ECO:0007669"/>
    <property type="project" value="TreeGrafter"/>
</dbReference>
<dbReference type="GO" id="GO:0005524">
    <property type="term" value="F:ATP binding"/>
    <property type="evidence" value="ECO:0007669"/>
    <property type="project" value="UniProtKB-UniRule"/>
</dbReference>
<dbReference type="GO" id="GO:0016887">
    <property type="term" value="F:ATP hydrolysis activity"/>
    <property type="evidence" value="ECO:0007669"/>
    <property type="project" value="InterPro"/>
</dbReference>
<dbReference type="GO" id="GO:0140664">
    <property type="term" value="F:ATP-dependent DNA damage sensor activity"/>
    <property type="evidence" value="ECO:0007669"/>
    <property type="project" value="InterPro"/>
</dbReference>
<dbReference type="GO" id="GO:0003684">
    <property type="term" value="F:damaged DNA binding"/>
    <property type="evidence" value="ECO:0007669"/>
    <property type="project" value="UniProtKB-UniRule"/>
</dbReference>
<dbReference type="GO" id="GO:0003697">
    <property type="term" value="F:single-stranded DNA binding"/>
    <property type="evidence" value="ECO:0007669"/>
    <property type="project" value="UniProtKB-UniRule"/>
</dbReference>
<dbReference type="GO" id="GO:0006310">
    <property type="term" value="P:DNA recombination"/>
    <property type="evidence" value="ECO:0007669"/>
    <property type="project" value="UniProtKB-UniRule"/>
</dbReference>
<dbReference type="GO" id="GO:0006281">
    <property type="term" value="P:DNA repair"/>
    <property type="evidence" value="ECO:0007669"/>
    <property type="project" value="UniProtKB-UniRule"/>
</dbReference>
<dbReference type="GO" id="GO:0009432">
    <property type="term" value="P:SOS response"/>
    <property type="evidence" value="ECO:0007669"/>
    <property type="project" value="UniProtKB-UniRule"/>
</dbReference>
<dbReference type="CDD" id="cd00983">
    <property type="entry name" value="RecA"/>
    <property type="match status" value="1"/>
</dbReference>
<dbReference type="FunFam" id="3.40.50.300:FF:000087">
    <property type="entry name" value="Recombinase RecA"/>
    <property type="match status" value="1"/>
</dbReference>
<dbReference type="Gene3D" id="3.40.50.300">
    <property type="entry name" value="P-loop containing nucleotide triphosphate hydrolases"/>
    <property type="match status" value="1"/>
</dbReference>
<dbReference type="HAMAP" id="MF_00268">
    <property type="entry name" value="RecA"/>
    <property type="match status" value="1"/>
</dbReference>
<dbReference type="InterPro" id="IPR003593">
    <property type="entry name" value="AAA+_ATPase"/>
</dbReference>
<dbReference type="InterPro" id="IPR013765">
    <property type="entry name" value="DNA_recomb/repair_RecA"/>
</dbReference>
<dbReference type="InterPro" id="IPR020584">
    <property type="entry name" value="DNA_recomb/repair_RecA_CS"/>
</dbReference>
<dbReference type="InterPro" id="IPR027417">
    <property type="entry name" value="P-loop_NTPase"/>
</dbReference>
<dbReference type="InterPro" id="IPR049261">
    <property type="entry name" value="RecA-like_C"/>
</dbReference>
<dbReference type="InterPro" id="IPR049428">
    <property type="entry name" value="RecA-like_N"/>
</dbReference>
<dbReference type="InterPro" id="IPR020588">
    <property type="entry name" value="RecA_ATP-bd"/>
</dbReference>
<dbReference type="InterPro" id="IPR023400">
    <property type="entry name" value="RecA_C_sf"/>
</dbReference>
<dbReference type="InterPro" id="IPR020587">
    <property type="entry name" value="RecA_monomer-monomer_interface"/>
</dbReference>
<dbReference type="NCBIfam" id="TIGR02012">
    <property type="entry name" value="tigrfam_recA"/>
    <property type="match status" value="1"/>
</dbReference>
<dbReference type="PANTHER" id="PTHR45900:SF1">
    <property type="entry name" value="MITOCHONDRIAL DNA REPAIR PROTEIN RECA HOMOLOG-RELATED"/>
    <property type="match status" value="1"/>
</dbReference>
<dbReference type="PANTHER" id="PTHR45900">
    <property type="entry name" value="RECA"/>
    <property type="match status" value="1"/>
</dbReference>
<dbReference type="Pfam" id="PF00154">
    <property type="entry name" value="RecA"/>
    <property type="match status" value="1"/>
</dbReference>
<dbReference type="Pfam" id="PF21096">
    <property type="entry name" value="RecA_C"/>
    <property type="match status" value="1"/>
</dbReference>
<dbReference type="PRINTS" id="PR00142">
    <property type="entry name" value="RECA"/>
</dbReference>
<dbReference type="SMART" id="SM00382">
    <property type="entry name" value="AAA"/>
    <property type="match status" value="1"/>
</dbReference>
<dbReference type="SUPFAM" id="SSF52540">
    <property type="entry name" value="P-loop containing nucleoside triphosphate hydrolases"/>
    <property type="match status" value="1"/>
</dbReference>
<dbReference type="SUPFAM" id="SSF54752">
    <property type="entry name" value="RecA protein, C-terminal domain"/>
    <property type="match status" value="1"/>
</dbReference>
<dbReference type="PROSITE" id="PS00321">
    <property type="entry name" value="RECA_1"/>
    <property type="match status" value="1"/>
</dbReference>
<dbReference type="PROSITE" id="PS50162">
    <property type="entry name" value="RECA_2"/>
    <property type="match status" value="1"/>
</dbReference>
<dbReference type="PROSITE" id="PS50163">
    <property type="entry name" value="RECA_3"/>
    <property type="match status" value="1"/>
</dbReference>